<dbReference type="EMBL" id="CP000687">
    <property type="protein sequence ID" value="ABY69549.1"/>
    <property type="molecule type" value="Genomic_DNA"/>
</dbReference>
<dbReference type="RefSeq" id="WP_005604666.1">
    <property type="nucleotide sequence ID" value="NC_010278.1"/>
</dbReference>
<dbReference type="SMR" id="B0BPR4"/>
<dbReference type="KEGG" id="apj:APJL_0991"/>
<dbReference type="HOGENOM" id="CLU_089554_2_0_6"/>
<dbReference type="Proteomes" id="UP000008547">
    <property type="component" value="Chromosome"/>
</dbReference>
<dbReference type="GO" id="GO:0005886">
    <property type="term" value="C:plasma membrane"/>
    <property type="evidence" value="ECO:0007669"/>
    <property type="project" value="UniProtKB-SubCell"/>
</dbReference>
<dbReference type="HAMAP" id="MF_00189">
    <property type="entry name" value="YciB"/>
    <property type="match status" value="1"/>
</dbReference>
<dbReference type="InterPro" id="IPR006008">
    <property type="entry name" value="YciB"/>
</dbReference>
<dbReference type="NCBIfam" id="TIGR00997">
    <property type="entry name" value="ispZ"/>
    <property type="match status" value="1"/>
</dbReference>
<dbReference type="NCBIfam" id="NF001324">
    <property type="entry name" value="PRK00259.1-2"/>
    <property type="match status" value="1"/>
</dbReference>
<dbReference type="PANTHER" id="PTHR36917:SF1">
    <property type="entry name" value="INNER MEMBRANE-SPANNING PROTEIN YCIB"/>
    <property type="match status" value="1"/>
</dbReference>
<dbReference type="PANTHER" id="PTHR36917">
    <property type="entry name" value="INTRACELLULAR SEPTATION PROTEIN A-RELATED"/>
    <property type="match status" value="1"/>
</dbReference>
<dbReference type="Pfam" id="PF04279">
    <property type="entry name" value="IspA"/>
    <property type="match status" value="1"/>
</dbReference>
<sequence>MKQLLEFIPLILFFTVYKLYGVQQAAITLVIATVIQLIVLKVLYKKIEKSQWIMGIFVVFFGILTAYFNDLNFLKWKVTIINGLFAAVLLVSQFVFKKPIIQMLLGKELELPTNVWNRLNLGWAGFFIICMLLNIVISYYFSDDVWATFKTFGFTGLSLIAAIATGVYLYPHLKNVENTNEQA</sequence>
<proteinExistence type="inferred from homology"/>
<reference key="1">
    <citation type="journal article" date="2008" name="PLoS ONE">
        <title>Genome biology of Actinobacillus pleuropneumoniae JL03, an isolate of serotype 3 prevalent in China.</title>
        <authorList>
            <person name="Xu Z."/>
            <person name="Zhou Y."/>
            <person name="Li L."/>
            <person name="Zhou R."/>
            <person name="Xiao S."/>
            <person name="Wan Y."/>
            <person name="Zhang S."/>
            <person name="Wang K."/>
            <person name="Li W."/>
            <person name="Li L."/>
            <person name="Jin H."/>
            <person name="Kang M."/>
            <person name="Dalai B."/>
            <person name="Li T."/>
            <person name="Liu L."/>
            <person name="Cheng Y."/>
            <person name="Zhang L."/>
            <person name="Xu T."/>
            <person name="Zheng H."/>
            <person name="Pu S."/>
            <person name="Wang B."/>
            <person name="Gu W."/>
            <person name="Zhang X.L."/>
            <person name="Zhu G.-F."/>
            <person name="Wang S."/>
            <person name="Zhao G.-P."/>
            <person name="Chen H."/>
        </authorList>
    </citation>
    <scope>NUCLEOTIDE SEQUENCE [LARGE SCALE GENOMIC DNA]</scope>
    <source>
        <strain>JL03</strain>
    </source>
</reference>
<protein>
    <recommendedName>
        <fullName evidence="1">Inner membrane-spanning protein YciB</fullName>
    </recommendedName>
</protein>
<feature type="chain" id="PRO_1000098868" description="Inner membrane-spanning protein YciB">
    <location>
        <begin position="1"/>
        <end position="183"/>
    </location>
</feature>
<feature type="transmembrane region" description="Helical" evidence="1">
    <location>
        <begin position="19"/>
        <end position="39"/>
    </location>
</feature>
<feature type="transmembrane region" description="Helical" evidence="1">
    <location>
        <begin position="53"/>
        <end position="73"/>
    </location>
</feature>
<feature type="transmembrane region" description="Helical" evidence="1">
    <location>
        <begin position="76"/>
        <end position="96"/>
    </location>
</feature>
<feature type="transmembrane region" description="Helical" evidence="1">
    <location>
        <begin position="121"/>
        <end position="141"/>
    </location>
</feature>
<feature type="transmembrane region" description="Helical" evidence="1">
    <location>
        <begin position="151"/>
        <end position="171"/>
    </location>
</feature>
<keyword id="KW-0997">Cell inner membrane</keyword>
<keyword id="KW-1003">Cell membrane</keyword>
<keyword id="KW-0472">Membrane</keyword>
<keyword id="KW-0812">Transmembrane</keyword>
<keyword id="KW-1133">Transmembrane helix</keyword>
<organism>
    <name type="scientific">Actinobacillus pleuropneumoniae serotype 3 (strain JL03)</name>
    <dbReference type="NCBI Taxonomy" id="434271"/>
    <lineage>
        <taxon>Bacteria</taxon>
        <taxon>Pseudomonadati</taxon>
        <taxon>Pseudomonadota</taxon>
        <taxon>Gammaproteobacteria</taxon>
        <taxon>Pasteurellales</taxon>
        <taxon>Pasteurellaceae</taxon>
        <taxon>Actinobacillus</taxon>
    </lineage>
</organism>
<evidence type="ECO:0000255" key="1">
    <source>
        <dbReference type="HAMAP-Rule" id="MF_00189"/>
    </source>
</evidence>
<accession>B0BPR4</accession>
<gene>
    <name evidence="1" type="primary">yciB</name>
    <name type="ordered locus">APJL_0991</name>
</gene>
<name>YCIB_ACTPJ</name>
<comment type="function">
    <text evidence="1">Plays a role in cell envelope biogenesis, maintenance of cell envelope integrity and membrane homeostasis.</text>
</comment>
<comment type="subcellular location">
    <subcellularLocation>
        <location evidence="1">Cell inner membrane</location>
        <topology evidence="1">Multi-pass membrane protein</topology>
    </subcellularLocation>
</comment>
<comment type="similarity">
    <text evidence="1">Belongs to the YciB family.</text>
</comment>